<evidence type="ECO:0000255" key="1">
    <source>
        <dbReference type="HAMAP-Rule" id="MF_01128"/>
    </source>
</evidence>
<feature type="chain" id="PRO_1000213629" description="H(+)/Cl(-) exchange transporter ClcA">
    <location>
        <begin position="1"/>
        <end position="473"/>
    </location>
</feature>
<feature type="topological domain" description="Cytoplasmic" evidence="1">
    <location>
        <begin position="1"/>
        <end position="32"/>
    </location>
</feature>
<feature type="transmembrane region" description="Helical" evidence="1">
    <location>
        <begin position="33"/>
        <end position="69"/>
    </location>
</feature>
<feature type="topological domain" description="Periplasmic" evidence="1">
    <location>
        <begin position="70"/>
        <end position="76"/>
    </location>
</feature>
<feature type="transmembrane region" description="Helical" evidence="1">
    <location>
        <begin position="77"/>
        <end position="100"/>
    </location>
</feature>
<feature type="intramembrane region" description="Helical" evidence="1">
    <location>
        <begin position="109"/>
        <end position="116"/>
    </location>
</feature>
<feature type="topological domain" description="Cytoplasmic" evidence="1">
    <location>
        <begin position="117"/>
        <end position="123"/>
    </location>
</feature>
<feature type="transmembrane region" description="Helical" evidence="1">
    <location>
        <begin position="124"/>
        <end position="141"/>
    </location>
</feature>
<feature type="transmembrane region" description="Helical" evidence="1">
    <location>
        <begin position="148"/>
        <end position="166"/>
    </location>
</feature>
<feature type="topological domain" description="Cytoplasmic" evidence="1">
    <location>
        <begin position="167"/>
        <end position="176"/>
    </location>
</feature>
<feature type="intramembrane region" description="Helical" evidence="1">
    <location>
        <begin position="177"/>
        <end position="189"/>
    </location>
</feature>
<feature type="intramembrane region" description="Helical" evidence="1">
    <location>
        <begin position="193"/>
        <end position="201"/>
    </location>
</feature>
<feature type="topological domain" description="Cytoplasmic" evidence="1">
    <location>
        <begin position="202"/>
        <end position="214"/>
    </location>
</feature>
<feature type="transmembrane region" description="Helical" evidence="1">
    <location>
        <begin position="215"/>
        <end position="232"/>
    </location>
</feature>
<feature type="topological domain" description="Periplasmic" evidence="1">
    <location>
        <begin position="233"/>
        <end position="252"/>
    </location>
</feature>
<feature type="transmembrane region" description="Helical" evidence="1">
    <location>
        <begin position="253"/>
        <end position="281"/>
    </location>
</feature>
<feature type="topological domain" description="Cytoplasmic" evidence="1">
    <location>
        <begin position="282"/>
        <end position="287"/>
    </location>
</feature>
<feature type="transmembrane region" description="Helical" evidence="1">
    <location>
        <begin position="288"/>
        <end position="309"/>
    </location>
</feature>
<feature type="topological domain" description="Periplasmic" evidence="1">
    <location>
        <begin position="310"/>
        <end position="329"/>
    </location>
</feature>
<feature type="transmembrane region" description="Helical" evidence="1">
    <location>
        <begin position="330"/>
        <end position="349"/>
    </location>
</feature>
<feature type="transmembrane region" description="Helical" evidence="1">
    <location>
        <begin position="355"/>
        <end position="376"/>
    </location>
</feature>
<feature type="topological domain" description="Periplasmic" evidence="1">
    <location>
        <begin position="377"/>
        <end position="386"/>
    </location>
</feature>
<feature type="intramembrane region" description="Helical" evidence="1">
    <location>
        <begin position="387"/>
        <end position="401"/>
    </location>
</feature>
<feature type="intramembrane region" description="Note=Loop between two helices" evidence="1">
    <location>
        <begin position="402"/>
        <end position="404"/>
    </location>
</feature>
<feature type="intramembrane region" description="Helical" evidence="1">
    <location>
        <begin position="405"/>
        <end position="416"/>
    </location>
</feature>
<feature type="intramembrane region" description="Note=Loop between two helices" evidence="1">
    <location>
        <begin position="417"/>
        <end position="421"/>
    </location>
</feature>
<feature type="transmembrane region" description="Helical" evidence="1">
    <location>
        <begin position="422"/>
        <end position="438"/>
    </location>
</feature>
<feature type="topological domain" description="Cytoplasmic" evidence="1">
    <location>
        <begin position="439"/>
        <end position="473"/>
    </location>
</feature>
<feature type="short sequence motif" description="Selectivity filter part_1" evidence="1">
    <location>
        <begin position="106"/>
        <end position="110"/>
    </location>
</feature>
<feature type="short sequence motif" description="Selectivity filter part_2" evidence="1">
    <location>
        <begin position="146"/>
        <end position="150"/>
    </location>
</feature>
<feature type="short sequence motif" description="Selectivity filter part_3" evidence="1">
    <location>
        <begin position="355"/>
        <end position="359"/>
    </location>
</feature>
<feature type="binding site" evidence="1">
    <location>
        <position position="107"/>
    </location>
    <ligand>
        <name>chloride</name>
        <dbReference type="ChEBI" id="CHEBI:17996"/>
    </ligand>
</feature>
<feature type="binding site" evidence="1">
    <location>
        <position position="356"/>
    </location>
    <ligand>
        <name>chloride</name>
        <dbReference type="ChEBI" id="CHEBI:17996"/>
    </ligand>
</feature>
<feature type="binding site" evidence="1">
    <location>
        <position position="357"/>
    </location>
    <ligand>
        <name>chloride</name>
        <dbReference type="ChEBI" id="CHEBI:17996"/>
    </ligand>
</feature>
<feature type="binding site" evidence="1">
    <location>
        <position position="445"/>
    </location>
    <ligand>
        <name>chloride</name>
        <dbReference type="ChEBI" id="CHEBI:17996"/>
    </ligand>
</feature>
<feature type="site" description="Mediates proton transfer from the outer aqueous phase to the interior of the protein; involved in linking H(+) and Cl(-) transport" evidence="1">
    <location>
        <position position="148"/>
    </location>
</feature>
<feature type="site" description="Mediates proton transfer from the protein to the inner aqueous phase" evidence="1">
    <location>
        <position position="203"/>
    </location>
</feature>
<dbReference type="EMBL" id="CP001396">
    <property type="protein sequence ID" value="ACR62143.1"/>
    <property type="molecule type" value="Genomic_DNA"/>
</dbReference>
<dbReference type="RefSeq" id="WP_000845394.1">
    <property type="nucleotide sequence ID" value="NC_012759.1"/>
</dbReference>
<dbReference type="SMR" id="C4ZRP8"/>
<dbReference type="GeneID" id="93777272"/>
<dbReference type="KEGG" id="ebw:BWG_0148"/>
<dbReference type="HOGENOM" id="CLU_015263_7_0_6"/>
<dbReference type="GO" id="GO:0005886">
    <property type="term" value="C:plasma membrane"/>
    <property type="evidence" value="ECO:0007669"/>
    <property type="project" value="UniProtKB-SubCell"/>
</dbReference>
<dbReference type="GO" id="GO:0015297">
    <property type="term" value="F:antiporter activity"/>
    <property type="evidence" value="ECO:0007669"/>
    <property type="project" value="UniProtKB-UniRule"/>
</dbReference>
<dbReference type="GO" id="GO:0005247">
    <property type="term" value="F:voltage-gated chloride channel activity"/>
    <property type="evidence" value="ECO:0007669"/>
    <property type="project" value="TreeGrafter"/>
</dbReference>
<dbReference type="CDD" id="cd01031">
    <property type="entry name" value="EriC"/>
    <property type="match status" value="1"/>
</dbReference>
<dbReference type="FunFam" id="1.10.3080.10:FF:000005">
    <property type="entry name" value="H(+)/Cl(-) exchange transporter ClcA"/>
    <property type="match status" value="1"/>
</dbReference>
<dbReference type="Gene3D" id="1.10.3080.10">
    <property type="entry name" value="Clc chloride channel"/>
    <property type="match status" value="1"/>
</dbReference>
<dbReference type="HAMAP" id="MF_01128">
    <property type="entry name" value="CLC_ClcA"/>
    <property type="match status" value="1"/>
</dbReference>
<dbReference type="InterPro" id="IPR023861">
    <property type="entry name" value="Cl-channel_ClcA"/>
</dbReference>
<dbReference type="InterPro" id="IPR014743">
    <property type="entry name" value="Cl-channel_core"/>
</dbReference>
<dbReference type="InterPro" id="IPR001807">
    <property type="entry name" value="ClC"/>
</dbReference>
<dbReference type="NCBIfam" id="NF003640">
    <property type="entry name" value="PRK05277.1"/>
    <property type="match status" value="1"/>
</dbReference>
<dbReference type="PANTHER" id="PTHR45711">
    <property type="entry name" value="CHLORIDE CHANNEL PROTEIN"/>
    <property type="match status" value="1"/>
</dbReference>
<dbReference type="PANTHER" id="PTHR45711:SF6">
    <property type="entry name" value="CHLORIDE CHANNEL PROTEIN"/>
    <property type="match status" value="1"/>
</dbReference>
<dbReference type="Pfam" id="PF00654">
    <property type="entry name" value="Voltage_CLC"/>
    <property type="match status" value="1"/>
</dbReference>
<dbReference type="PRINTS" id="PR00762">
    <property type="entry name" value="CLCHANNEL"/>
</dbReference>
<dbReference type="SUPFAM" id="SSF81340">
    <property type="entry name" value="Clc chloride channel"/>
    <property type="match status" value="1"/>
</dbReference>
<protein>
    <recommendedName>
        <fullName evidence="1">H(+)/Cl(-) exchange transporter ClcA</fullName>
    </recommendedName>
</protein>
<proteinExistence type="inferred from homology"/>
<keyword id="KW-0050">Antiport</keyword>
<keyword id="KW-0997">Cell inner membrane</keyword>
<keyword id="KW-1003">Cell membrane</keyword>
<keyword id="KW-0868">Chloride</keyword>
<keyword id="KW-0406">Ion transport</keyword>
<keyword id="KW-0472">Membrane</keyword>
<keyword id="KW-0812">Transmembrane</keyword>
<keyword id="KW-1133">Transmembrane helix</keyword>
<keyword id="KW-0813">Transport</keyword>
<comment type="function">
    <text evidence="1">Proton-coupled chloride transporter. Functions as antiport system and exchanges two chloride ions for 1 proton. Probably acts as an electrical shunt for an outwardly-directed proton pump that is linked to amino acid decarboxylation, as part of the extreme acid resistance (XAR) response.</text>
</comment>
<comment type="catalytic activity">
    <reaction evidence="1">
        <text>2 chloride(in) + H(+)(out) = 2 chloride(out) + H(+)(in)</text>
        <dbReference type="Rhea" id="RHEA:29567"/>
        <dbReference type="ChEBI" id="CHEBI:15378"/>
        <dbReference type="ChEBI" id="CHEBI:17996"/>
    </reaction>
</comment>
<comment type="subunit">
    <text evidence="1">Homodimer.</text>
</comment>
<comment type="subcellular location">
    <subcellularLocation>
        <location evidence="1">Cell inner membrane</location>
        <topology evidence="1">Multi-pass membrane protein</topology>
    </subcellularLocation>
</comment>
<comment type="similarity">
    <text evidence="1">Belongs to the chloride channel (TC 2.A.49) family. ClcA subfamily.</text>
</comment>
<reference key="1">
    <citation type="journal article" date="2009" name="J. Bacteriol.">
        <title>Genomic sequencing reveals regulatory mutations and recombinational events in the widely used MC4100 lineage of Escherichia coli K-12.</title>
        <authorList>
            <person name="Ferenci T."/>
            <person name="Zhou Z."/>
            <person name="Betteridge T."/>
            <person name="Ren Y."/>
            <person name="Liu Y."/>
            <person name="Feng L."/>
            <person name="Reeves P.R."/>
            <person name="Wang L."/>
        </authorList>
    </citation>
    <scope>NUCLEOTIDE SEQUENCE [LARGE SCALE GENOMIC DNA]</scope>
    <source>
        <strain>K12 / MC4100 / BW2952</strain>
    </source>
</reference>
<gene>
    <name evidence="1" type="primary">clcA</name>
    <name evidence="1" type="synonym">eriC</name>
    <name type="ordered locus">BWG_0148</name>
</gene>
<organism>
    <name type="scientific">Escherichia coli (strain K12 / MC4100 / BW2952)</name>
    <dbReference type="NCBI Taxonomy" id="595496"/>
    <lineage>
        <taxon>Bacteria</taxon>
        <taxon>Pseudomonadati</taxon>
        <taxon>Pseudomonadota</taxon>
        <taxon>Gammaproteobacteria</taxon>
        <taxon>Enterobacterales</taxon>
        <taxon>Enterobacteriaceae</taxon>
        <taxon>Escherichia</taxon>
    </lineage>
</organism>
<accession>C4ZRP8</accession>
<sequence>MKTDTPSLETPQAARLRRRQLIRQLLERDKTPLAILFMAAVVGTLVGLAAVAFDKGVAWLQNQRMGALVHTADNYPLLLTVAFLCSAVLAMFGYFLVRKYAPEAGGSGIPEIEGALEDQRPVRWWRVLPVKFFGGLGTLGGGMVLGREGPTVQIGGNIGRMVLDIFRLKGDEARHTLLATGAAAGLAAAFNAPLAGILFIIEEMRPQFRYTLISIKAVFIGVIMSTIMYRIFNHEVALIDVGKLSDAPLNTLWLYLILGIIFGIFGPIFNKWVLGMQDLLHRVHGGNITKWVLMGGAIGGLCGLLGFVAPATSGGGFNLIPIATAGNFSMGMLVFIFVARVITTLLCFSSGAPGGIFAPMLALGTVLGTAFGMVAVELFPQYHLEAGTFAIAGMGALLAASIRAPLTGIILVLEMTDNYQLILPMIITGLGATLLAQFTGGKPLYSAILARTLAKQEAEQLARSKAASASENT</sequence>
<name>CLCA_ECOBW</name>